<protein>
    <recommendedName>
        <fullName>Transmembrane protein 183</fullName>
    </recommendedName>
</protein>
<gene>
    <name type="primary">TMEM183</name>
</gene>
<evidence type="ECO:0000255" key="1"/>
<evidence type="ECO:0000256" key="2">
    <source>
        <dbReference type="SAM" id="MobiDB-lite"/>
    </source>
</evidence>
<evidence type="ECO:0000305" key="3"/>
<comment type="subcellular location">
    <subcellularLocation>
        <location evidence="3">Membrane</location>
        <topology evidence="3">Single-pass membrane protein</topology>
    </subcellularLocation>
</comment>
<comment type="similarity">
    <text evidence="3">Belongs to the TMEM183 family.</text>
</comment>
<comment type="sequence caution" evidence="3">
    <conflict type="erroneous termination">
        <sequence resource="EMBL-CDS" id="CAH91975"/>
    </conflict>
    <text>Truncated C-terminus.</text>
</comment>
<keyword id="KW-0472">Membrane</keyword>
<keyword id="KW-1185">Reference proteome</keyword>
<keyword id="KW-0812">Transmembrane</keyword>
<keyword id="KW-1133">Transmembrane helix</keyword>
<sequence>MARGPGPLGRPRPDTVAMPKRGKRLKFRAHDACSGRVTVADYANSDPAVVRSGRVKKAVANAVQQEVKSLCGLEASQVPTEEALSGAGEPCDIIDSSDEMEAQEESIHERTVSRKKKSKRHKEELDGAGEEYPMDIWLLLASYIRPEDIVNFSLICKNAWTVTCTAAFWTRLYRRHYTLDASLPLRLRPESMEKLRCLRACVIRSLYHMYEPFAARISKNPAIPESTPSTLKNSKCLLFWCRKIVGNRQEPMWEFNFKFKKQSPRLKSKCTGGLQPPVQYEDVHTNPDQDCCLLQVTTLNFIFIPIVMGMIFTLFTINVSTDMRHHRVRLVFQDSPVHGGRKPRSEQGVQVILDPVHSVRLFDWWHPQYPFSLRALLLPIPWGQPRV</sequence>
<feature type="chain" id="PRO_0000089253" description="Transmembrane protein 183">
    <location>
        <begin position="1"/>
        <end position="387"/>
    </location>
</feature>
<feature type="transmembrane region" description="Helical" evidence="1">
    <location>
        <begin position="299"/>
        <end position="319"/>
    </location>
</feature>
<feature type="region of interest" description="Disordered" evidence="2">
    <location>
        <begin position="1"/>
        <end position="20"/>
    </location>
</feature>
<feature type="region of interest" description="Disordered" evidence="2">
    <location>
        <begin position="99"/>
        <end position="126"/>
    </location>
</feature>
<organism>
    <name type="scientific">Pongo abelii</name>
    <name type="common">Sumatran orangutan</name>
    <name type="synonym">Pongo pygmaeus abelii</name>
    <dbReference type="NCBI Taxonomy" id="9601"/>
    <lineage>
        <taxon>Eukaryota</taxon>
        <taxon>Metazoa</taxon>
        <taxon>Chordata</taxon>
        <taxon>Craniata</taxon>
        <taxon>Vertebrata</taxon>
        <taxon>Euteleostomi</taxon>
        <taxon>Mammalia</taxon>
        <taxon>Eutheria</taxon>
        <taxon>Euarchontoglires</taxon>
        <taxon>Primates</taxon>
        <taxon>Haplorrhini</taxon>
        <taxon>Catarrhini</taxon>
        <taxon>Hominidae</taxon>
        <taxon>Pongo</taxon>
    </lineage>
</organism>
<proteinExistence type="evidence at transcript level"/>
<accession>Q5R8D5</accession>
<name>TM183_PONAB</name>
<reference key="1">
    <citation type="submission" date="2004-11" db="EMBL/GenBank/DDBJ databases">
        <authorList>
            <consortium name="The German cDNA consortium"/>
        </authorList>
    </citation>
    <scope>NUCLEOTIDE SEQUENCE [LARGE SCALE MRNA]</scope>
    <source>
        <tissue>Kidney</tissue>
    </source>
</reference>
<dbReference type="EMBL" id="CR859818">
    <property type="protein sequence ID" value="CAH91975.1"/>
    <property type="status" value="ALT_TERM"/>
    <property type="molecule type" value="mRNA"/>
</dbReference>
<dbReference type="FunCoup" id="Q5R8D5">
    <property type="interactions" value="241"/>
</dbReference>
<dbReference type="STRING" id="9601.ENSPPYP00000000376"/>
<dbReference type="eggNOG" id="ENOG502QS4U">
    <property type="taxonomic scope" value="Eukaryota"/>
</dbReference>
<dbReference type="InParanoid" id="Q5R8D5"/>
<dbReference type="Proteomes" id="UP000001595">
    <property type="component" value="Unplaced"/>
</dbReference>
<dbReference type="GO" id="GO:0016020">
    <property type="term" value="C:membrane"/>
    <property type="evidence" value="ECO:0007669"/>
    <property type="project" value="UniProtKB-SubCell"/>
</dbReference>
<dbReference type="GO" id="GO:0019005">
    <property type="term" value="C:SCF ubiquitin ligase complex"/>
    <property type="evidence" value="ECO:0007669"/>
    <property type="project" value="TreeGrafter"/>
</dbReference>
<dbReference type="GO" id="GO:0031647">
    <property type="term" value="P:regulation of protein stability"/>
    <property type="evidence" value="ECO:0007669"/>
    <property type="project" value="TreeGrafter"/>
</dbReference>
<dbReference type="InterPro" id="IPR036047">
    <property type="entry name" value="F-box-like_dom_sf"/>
</dbReference>
<dbReference type="InterPro" id="IPR026509">
    <property type="entry name" value="TMEM183"/>
</dbReference>
<dbReference type="PANTHER" id="PTHR20988">
    <property type="entry name" value="TRANSMEMBRANE PROTEIN 183A-RELATED"/>
    <property type="match status" value="1"/>
</dbReference>
<dbReference type="PANTHER" id="PTHR20988:SF2">
    <property type="entry name" value="TRANSMEMBRANE PROTEIN 183A-RELATED"/>
    <property type="match status" value="1"/>
</dbReference>
<dbReference type="SUPFAM" id="SSF81383">
    <property type="entry name" value="F-box domain"/>
    <property type="match status" value="1"/>
</dbReference>